<comment type="function">
    <text evidence="2">Signal-recognition-particle (SRP) assembly has a crucial role in targeting secretory proteins to the rough endoplasmic reticulum (ER) membrane. SRP is required for the cotranslational protein translocation for ER import and preferentially recognizes strongly hydrophobic signal sequences. It is involved in targeting the nascent chain-ribosome (RNC) complex to the ER and is proposed to participate in the arrest of nascent chain elongation during membrane targeting. SRP54 binds to the signal sequence of presecretory protein when they emerge from the ribosomes. SRP54 interacts with the scR1 RNA and mediates the association of the resulting SRP-RNC complex with the signal recognition particle receptor (SR) via its alpha subunit SRP101. Both, SRP54 and SRP101, are locked in their GTP bound forms in the SRP-RNC-SR complex, which dissociates upon transferring the signal sequence to the protein-conducting channel (translocon). After signal sequence transfer, SRP54 and SRP101 act as reciprocal GTPase-activating proteins (GAPs), thereby resolving their association.</text>
</comment>
<comment type="catalytic activity">
    <reaction evidence="3">
        <text>GTP + H2O = GDP + phosphate + H(+)</text>
        <dbReference type="Rhea" id="RHEA:19669"/>
        <dbReference type="ChEBI" id="CHEBI:15377"/>
        <dbReference type="ChEBI" id="CHEBI:15378"/>
        <dbReference type="ChEBI" id="CHEBI:37565"/>
        <dbReference type="ChEBI" id="CHEBI:43474"/>
        <dbReference type="ChEBI" id="CHEBI:58189"/>
        <dbReference type="EC" id="3.6.5.4"/>
    </reaction>
    <physiologicalReaction direction="left-to-right" evidence="3">
        <dbReference type="Rhea" id="RHEA:19670"/>
    </physiologicalReaction>
</comment>
<comment type="subunit">
    <text evidence="2">Fungal signal recognition particle (SRP) complex consists of a 7S RNA molecule (scR1) and at least six protein subunits: SRP72, SRP68, SRP54, SEC65, SRP21 and SRP14 (By similarity). Interacts with SRP101 (By similarity).</text>
</comment>
<comment type="subcellular location">
    <subcellularLocation>
        <location evidence="2">Cytoplasm</location>
    </subcellularLocation>
    <subcellularLocation>
        <location evidence="2">Endoplasmic reticulum</location>
    </subcellularLocation>
</comment>
<comment type="domain">
    <text evidence="3">The NG domain, also named G domain, is a special guanosine triphosphatase (GTPase) domain, which binds GTP and forms a guanosine 5'-triphosphate (GTP)-dependent complex with a homologous NG domain in the SRP receptor subunit SRP101. The two NG domains undergo cooperative rearrangements upon their assembly, which culminate in the reciprocal activation of the GTPase activity of one another. SRP receptor compaction upon binding with cargo-loaded SRP and GTPase rearrangement drive SRP-mediated cotranslational protein translocation into the ER.</text>
</comment>
<comment type="domain">
    <text evidence="3">The M domain binds the 7SL RNA and the signal sequence of presecretory proteins.</text>
</comment>
<comment type="similarity">
    <text evidence="5">Belongs to the GTP-binding SRP family. SRP54 subfamily.</text>
</comment>
<gene>
    <name type="primary">SRP54</name>
</gene>
<organism>
    <name type="scientific">Candida albicans</name>
    <name type="common">Yeast</name>
    <dbReference type="NCBI Taxonomy" id="5476"/>
    <lineage>
        <taxon>Eukaryota</taxon>
        <taxon>Fungi</taxon>
        <taxon>Dikarya</taxon>
        <taxon>Ascomycota</taxon>
        <taxon>Saccharomycotina</taxon>
        <taxon>Pichiomycetes</taxon>
        <taxon>Debaryomycetaceae</taxon>
        <taxon>Candida/Lodderomyces clade</taxon>
        <taxon>Candida</taxon>
    </lineage>
</organism>
<feature type="chain" id="PRO_0000101200" description="Signal recognition particle subunit SRP54">
    <location>
        <begin position="1"/>
        <end position="556"/>
    </location>
</feature>
<feature type="region of interest" description="G-domain">
    <location>
        <begin position="1"/>
        <end position="312"/>
    </location>
</feature>
<feature type="region of interest" description="M-domain">
    <location>
        <begin position="313"/>
        <end position="556"/>
    </location>
</feature>
<feature type="region of interest" description="Disordered" evidence="4">
    <location>
        <begin position="450"/>
        <end position="470"/>
    </location>
</feature>
<feature type="binding site" evidence="1">
    <location>
        <begin position="125"/>
        <end position="132"/>
    </location>
    <ligand>
        <name>GTP</name>
        <dbReference type="ChEBI" id="CHEBI:37565"/>
    </ligand>
</feature>
<feature type="binding site" evidence="1">
    <location>
        <begin position="207"/>
        <end position="211"/>
    </location>
    <ligand>
        <name>GTP</name>
        <dbReference type="ChEBI" id="CHEBI:37565"/>
    </ligand>
</feature>
<feature type="binding site" evidence="1">
    <location>
        <begin position="265"/>
        <end position="268"/>
    </location>
    <ligand>
        <name>GTP</name>
        <dbReference type="ChEBI" id="CHEBI:37565"/>
    </ligand>
</feature>
<reference key="1">
    <citation type="submission" date="1997-12" db="EMBL/GenBank/DDBJ databases">
        <title>Isolation of the SRP54 homolog from the pathogenic yeast, Candida albicans.</title>
        <authorList>
            <person name="Hosking S.L."/>
            <person name="Stirling C.J."/>
            <person name="Egerton M."/>
        </authorList>
    </citation>
    <scope>NUCLEOTIDE SEQUENCE [MRNA]</scope>
    <source>
        <strain>B2630</strain>
    </source>
</reference>
<accession>O42816</accession>
<proteinExistence type="evidence at transcript level"/>
<dbReference type="EC" id="3.6.5.4" evidence="3"/>
<dbReference type="EMBL" id="AJ222805">
    <property type="protein sequence ID" value="CAA10999.1"/>
    <property type="molecule type" value="mRNA"/>
</dbReference>
<dbReference type="SMR" id="O42816"/>
<dbReference type="VEuPathDB" id="FungiDB:CAWG_01464"/>
<dbReference type="VEuPathDB" id="FungiDB:CR_01110W_A"/>
<dbReference type="GO" id="GO:0005829">
    <property type="term" value="C:cytosol"/>
    <property type="evidence" value="ECO:0007669"/>
    <property type="project" value="TreeGrafter"/>
</dbReference>
<dbReference type="GO" id="GO:0005783">
    <property type="term" value="C:endoplasmic reticulum"/>
    <property type="evidence" value="ECO:0007669"/>
    <property type="project" value="UniProtKB-SubCell"/>
</dbReference>
<dbReference type="GO" id="GO:0005786">
    <property type="term" value="C:signal recognition particle, endoplasmic reticulum targeting"/>
    <property type="evidence" value="ECO:0007669"/>
    <property type="project" value="UniProtKB-KW"/>
</dbReference>
<dbReference type="GO" id="GO:0008312">
    <property type="term" value="F:7S RNA binding"/>
    <property type="evidence" value="ECO:0007669"/>
    <property type="project" value="EnsemblFungi"/>
</dbReference>
<dbReference type="GO" id="GO:0016887">
    <property type="term" value="F:ATP hydrolysis activity"/>
    <property type="evidence" value="ECO:0007669"/>
    <property type="project" value="InterPro"/>
</dbReference>
<dbReference type="GO" id="GO:0030942">
    <property type="term" value="F:endoplasmic reticulum signal peptide binding"/>
    <property type="evidence" value="ECO:0007669"/>
    <property type="project" value="TreeGrafter"/>
</dbReference>
<dbReference type="GO" id="GO:0005525">
    <property type="term" value="F:GTP binding"/>
    <property type="evidence" value="ECO:0007669"/>
    <property type="project" value="UniProtKB-KW"/>
</dbReference>
<dbReference type="GO" id="GO:0003924">
    <property type="term" value="F:GTPase activity"/>
    <property type="evidence" value="ECO:0007669"/>
    <property type="project" value="EnsemblFungi"/>
</dbReference>
<dbReference type="GO" id="GO:0006616">
    <property type="term" value="P:SRP-dependent cotranslational protein targeting to membrane, translocation"/>
    <property type="evidence" value="ECO:0007669"/>
    <property type="project" value="TreeGrafter"/>
</dbReference>
<dbReference type="CDD" id="cd17875">
    <property type="entry name" value="SRP54_G"/>
    <property type="match status" value="1"/>
</dbReference>
<dbReference type="FunFam" id="1.10.260.30:FF:000003">
    <property type="entry name" value="Signal recognition particle 54 kDa protein"/>
    <property type="match status" value="1"/>
</dbReference>
<dbReference type="FunFam" id="3.40.50.300:FF:000022">
    <property type="entry name" value="Signal recognition particle 54 kDa subunit"/>
    <property type="match status" value="1"/>
</dbReference>
<dbReference type="Gene3D" id="3.40.50.300">
    <property type="entry name" value="P-loop containing nucleotide triphosphate hydrolases"/>
    <property type="match status" value="1"/>
</dbReference>
<dbReference type="Gene3D" id="1.20.120.140">
    <property type="entry name" value="Signal recognition particle SRP54, nucleotide-binding domain"/>
    <property type="match status" value="1"/>
</dbReference>
<dbReference type="Gene3D" id="1.10.260.30">
    <property type="entry name" value="Signal recognition particle, SRP54 subunit, M-domain"/>
    <property type="match status" value="1"/>
</dbReference>
<dbReference type="HAMAP" id="MF_00306">
    <property type="entry name" value="SRP54"/>
    <property type="match status" value="1"/>
</dbReference>
<dbReference type="InterPro" id="IPR003593">
    <property type="entry name" value="AAA+_ATPase"/>
</dbReference>
<dbReference type="InterPro" id="IPR027417">
    <property type="entry name" value="P-loop_NTPase"/>
</dbReference>
<dbReference type="InterPro" id="IPR036891">
    <property type="entry name" value="Signal_recog_part_SRP54_M_sf"/>
</dbReference>
<dbReference type="InterPro" id="IPR013822">
    <property type="entry name" value="Signal_recog_particl_SRP54_hlx"/>
</dbReference>
<dbReference type="InterPro" id="IPR004125">
    <property type="entry name" value="Signal_recog_particle_SRP54_M"/>
</dbReference>
<dbReference type="InterPro" id="IPR036225">
    <property type="entry name" value="SRP/SRP_N"/>
</dbReference>
<dbReference type="InterPro" id="IPR022941">
    <property type="entry name" value="SRP54"/>
</dbReference>
<dbReference type="InterPro" id="IPR006325">
    <property type="entry name" value="SRP54_euk"/>
</dbReference>
<dbReference type="InterPro" id="IPR000897">
    <property type="entry name" value="SRP54_GTPase_dom"/>
</dbReference>
<dbReference type="InterPro" id="IPR042101">
    <property type="entry name" value="SRP54_N_sf"/>
</dbReference>
<dbReference type="NCBIfam" id="TIGR01425">
    <property type="entry name" value="SRP54_euk"/>
    <property type="match status" value="1"/>
</dbReference>
<dbReference type="PANTHER" id="PTHR11564">
    <property type="entry name" value="SIGNAL RECOGNITION PARTICLE 54K PROTEIN SRP54"/>
    <property type="match status" value="1"/>
</dbReference>
<dbReference type="PANTHER" id="PTHR11564:SF5">
    <property type="entry name" value="SIGNAL RECOGNITION PARTICLE SUBUNIT SRP54"/>
    <property type="match status" value="1"/>
</dbReference>
<dbReference type="Pfam" id="PF00448">
    <property type="entry name" value="SRP54"/>
    <property type="match status" value="1"/>
</dbReference>
<dbReference type="Pfam" id="PF02881">
    <property type="entry name" value="SRP54_N"/>
    <property type="match status" value="1"/>
</dbReference>
<dbReference type="Pfam" id="PF02978">
    <property type="entry name" value="SRP_SPB"/>
    <property type="match status" value="1"/>
</dbReference>
<dbReference type="SMART" id="SM00382">
    <property type="entry name" value="AAA"/>
    <property type="match status" value="1"/>
</dbReference>
<dbReference type="SMART" id="SM00962">
    <property type="entry name" value="SRP54"/>
    <property type="match status" value="1"/>
</dbReference>
<dbReference type="SMART" id="SM00963">
    <property type="entry name" value="SRP54_N"/>
    <property type="match status" value="1"/>
</dbReference>
<dbReference type="SUPFAM" id="SSF47364">
    <property type="entry name" value="Domain of the SRP/SRP receptor G-proteins"/>
    <property type="match status" value="1"/>
</dbReference>
<dbReference type="SUPFAM" id="SSF52540">
    <property type="entry name" value="P-loop containing nucleoside triphosphate hydrolases"/>
    <property type="match status" value="1"/>
</dbReference>
<dbReference type="SUPFAM" id="SSF47446">
    <property type="entry name" value="Signal peptide-binding domain"/>
    <property type="match status" value="1"/>
</dbReference>
<dbReference type="PROSITE" id="PS00300">
    <property type="entry name" value="SRP54"/>
    <property type="match status" value="1"/>
</dbReference>
<sequence length="556" mass="60701">MVLADLGSRLRGALSSVESGSDDEIQQMIKDICSALLESDVNVKLVAKLRGNIKNKIDESNVSKETSAMNKRKKLQKIIFDELCALVDSNVEPPKPKKLSTSTKTINGKKVRLSKESSHVIMFVGLQGAGKTTSCTKLAVYYKKRGFKVGLVCADTFRAGAFDQLKQNAIKANIPYYGSYLEPDPVKIAFEGVQKFKQEKFDIIIVDTSGRHRQEEQLFTEMVQIGEAVQPTQTIMVMDGSIGQAAESQARAFKESSNFGSIILTKMDGHAKGGGAISAVAATKTPIVFIGTGEHVGDLEIFKPTTFISKLLGIGDIQGLIEHVQSLNLHQDEGHKQTIEHIKEGKFTLRDFQNQMNNFLKMGPLTNIASMIPGLSNIMSQVGDEETSKKIKNMIYIMDSMTTKELECDGRIFIKEPSRIVRVARGSGCAVVEVEMILQQHRMMSTMAKSAMAAQGGQPGQPGNPMANNPQMQRMMQQAQSNPNFMQQAMNMLGGAGGGAGGAGGLAGMMNNPAMMQQAQQMMRSNPQMMQQAQQMMKNPGMMQKMMQQFGGMGGM</sequence>
<name>SRP54_CANAX</name>
<protein>
    <recommendedName>
        <fullName>Signal recognition particle subunit SRP54</fullName>
        <ecNumber evidence="3">3.6.5.4</ecNumber>
    </recommendedName>
    <alternativeName>
        <fullName>Signal recognition particle 54 kDa protein homolog</fullName>
    </alternativeName>
</protein>
<evidence type="ECO:0000250" key="1"/>
<evidence type="ECO:0000250" key="2">
    <source>
        <dbReference type="UniProtKB" id="P20424"/>
    </source>
</evidence>
<evidence type="ECO:0000250" key="3">
    <source>
        <dbReference type="UniProtKB" id="P61011"/>
    </source>
</evidence>
<evidence type="ECO:0000256" key="4">
    <source>
        <dbReference type="SAM" id="MobiDB-lite"/>
    </source>
</evidence>
<evidence type="ECO:0000305" key="5"/>
<keyword id="KW-0963">Cytoplasm</keyword>
<keyword id="KW-0256">Endoplasmic reticulum</keyword>
<keyword id="KW-0342">GTP-binding</keyword>
<keyword id="KW-0378">Hydrolase</keyword>
<keyword id="KW-0547">Nucleotide-binding</keyword>
<keyword id="KW-0687">Ribonucleoprotein</keyword>
<keyword id="KW-0694">RNA-binding</keyword>
<keyword id="KW-0733">Signal recognition particle</keyword>